<dbReference type="EC" id="6.2.1.5" evidence="1"/>
<dbReference type="EMBL" id="CP000264">
    <property type="protein sequence ID" value="ABD53738.1"/>
    <property type="molecule type" value="Genomic_DNA"/>
</dbReference>
<dbReference type="RefSeq" id="WP_011453946.1">
    <property type="nucleotide sequence ID" value="NC_007802.1"/>
</dbReference>
<dbReference type="SMR" id="Q28U74"/>
<dbReference type="STRING" id="290400.Jann_0821"/>
<dbReference type="KEGG" id="jan:Jann_0821"/>
<dbReference type="eggNOG" id="COG0045">
    <property type="taxonomic scope" value="Bacteria"/>
</dbReference>
<dbReference type="HOGENOM" id="CLU_037430_0_2_5"/>
<dbReference type="OrthoDB" id="9802602at2"/>
<dbReference type="UniPathway" id="UPA00223">
    <property type="reaction ID" value="UER00999"/>
</dbReference>
<dbReference type="Proteomes" id="UP000008326">
    <property type="component" value="Chromosome"/>
</dbReference>
<dbReference type="GO" id="GO:0005829">
    <property type="term" value="C:cytosol"/>
    <property type="evidence" value="ECO:0007669"/>
    <property type="project" value="TreeGrafter"/>
</dbReference>
<dbReference type="GO" id="GO:0042709">
    <property type="term" value="C:succinate-CoA ligase complex"/>
    <property type="evidence" value="ECO:0007669"/>
    <property type="project" value="TreeGrafter"/>
</dbReference>
<dbReference type="GO" id="GO:0005524">
    <property type="term" value="F:ATP binding"/>
    <property type="evidence" value="ECO:0007669"/>
    <property type="project" value="UniProtKB-UniRule"/>
</dbReference>
<dbReference type="GO" id="GO:0000287">
    <property type="term" value="F:magnesium ion binding"/>
    <property type="evidence" value="ECO:0007669"/>
    <property type="project" value="UniProtKB-UniRule"/>
</dbReference>
<dbReference type="GO" id="GO:0004775">
    <property type="term" value="F:succinate-CoA ligase (ADP-forming) activity"/>
    <property type="evidence" value="ECO:0007669"/>
    <property type="project" value="UniProtKB-UniRule"/>
</dbReference>
<dbReference type="GO" id="GO:0004776">
    <property type="term" value="F:succinate-CoA ligase (GDP-forming) activity"/>
    <property type="evidence" value="ECO:0007669"/>
    <property type="project" value="RHEA"/>
</dbReference>
<dbReference type="GO" id="GO:0006104">
    <property type="term" value="P:succinyl-CoA metabolic process"/>
    <property type="evidence" value="ECO:0007669"/>
    <property type="project" value="TreeGrafter"/>
</dbReference>
<dbReference type="GO" id="GO:0006099">
    <property type="term" value="P:tricarboxylic acid cycle"/>
    <property type="evidence" value="ECO:0007669"/>
    <property type="project" value="UniProtKB-UniRule"/>
</dbReference>
<dbReference type="FunFam" id="3.30.1490.20:FF:000002">
    <property type="entry name" value="Succinate--CoA ligase [ADP-forming] subunit beta"/>
    <property type="match status" value="1"/>
</dbReference>
<dbReference type="FunFam" id="3.30.470.20:FF:000002">
    <property type="entry name" value="Succinate--CoA ligase [ADP-forming] subunit beta"/>
    <property type="match status" value="1"/>
</dbReference>
<dbReference type="FunFam" id="3.40.50.261:FF:000001">
    <property type="entry name" value="Succinate--CoA ligase [ADP-forming] subunit beta"/>
    <property type="match status" value="1"/>
</dbReference>
<dbReference type="Gene3D" id="3.30.1490.20">
    <property type="entry name" value="ATP-grasp fold, A domain"/>
    <property type="match status" value="1"/>
</dbReference>
<dbReference type="Gene3D" id="3.30.470.20">
    <property type="entry name" value="ATP-grasp fold, B domain"/>
    <property type="match status" value="1"/>
</dbReference>
<dbReference type="Gene3D" id="3.40.50.261">
    <property type="entry name" value="Succinyl-CoA synthetase domains"/>
    <property type="match status" value="1"/>
</dbReference>
<dbReference type="HAMAP" id="MF_00558">
    <property type="entry name" value="Succ_CoA_beta"/>
    <property type="match status" value="1"/>
</dbReference>
<dbReference type="InterPro" id="IPR011761">
    <property type="entry name" value="ATP-grasp"/>
</dbReference>
<dbReference type="InterPro" id="IPR013650">
    <property type="entry name" value="ATP-grasp_succ-CoA_synth-type"/>
</dbReference>
<dbReference type="InterPro" id="IPR013815">
    <property type="entry name" value="ATP_grasp_subdomain_1"/>
</dbReference>
<dbReference type="InterPro" id="IPR017866">
    <property type="entry name" value="Succ-CoA_synthase_bsu_CS"/>
</dbReference>
<dbReference type="InterPro" id="IPR005811">
    <property type="entry name" value="SUCC_ACL_C"/>
</dbReference>
<dbReference type="InterPro" id="IPR005809">
    <property type="entry name" value="Succ_CoA_ligase-like_bsu"/>
</dbReference>
<dbReference type="InterPro" id="IPR016102">
    <property type="entry name" value="Succinyl-CoA_synth-like"/>
</dbReference>
<dbReference type="NCBIfam" id="NF001913">
    <property type="entry name" value="PRK00696.1"/>
    <property type="match status" value="1"/>
</dbReference>
<dbReference type="NCBIfam" id="TIGR01016">
    <property type="entry name" value="sucCoAbeta"/>
    <property type="match status" value="1"/>
</dbReference>
<dbReference type="PANTHER" id="PTHR11815:SF10">
    <property type="entry name" value="SUCCINATE--COA LIGASE [GDP-FORMING] SUBUNIT BETA, MITOCHONDRIAL"/>
    <property type="match status" value="1"/>
</dbReference>
<dbReference type="PANTHER" id="PTHR11815">
    <property type="entry name" value="SUCCINYL-COA SYNTHETASE BETA CHAIN"/>
    <property type="match status" value="1"/>
</dbReference>
<dbReference type="Pfam" id="PF08442">
    <property type="entry name" value="ATP-grasp_2"/>
    <property type="match status" value="1"/>
</dbReference>
<dbReference type="Pfam" id="PF00549">
    <property type="entry name" value="Ligase_CoA"/>
    <property type="match status" value="1"/>
</dbReference>
<dbReference type="PIRSF" id="PIRSF001554">
    <property type="entry name" value="SucCS_beta"/>
    <property type="match status" value="1"/>
</dbReference>
<dbReference type="SUPFAM" id="SSF56059">
    <property type="entry name" value="Glutathione synthetase ATP-binding domain-like"/>
    <property type="match status" value="1"/>
</dbReference>
<dbReference type="SUPFAM" id="SSF52210">
    <property type="entry name" value="Succinyl-CoA synthetase domains"/>
    <property type="match status" value="1"/>
</dbReference>
<dbReference type="PROSITE" id="PS50975">
    <property type="entry name" value="ATP_GRASP"/>
    <property type="match status" value="1"/>
</dbReference>
<dbReference type="PROSITE" id="PS01217">
    <property type="entry name" value="SUCCINYL_COA_LIG_3"/>
    <property type="match status" value="1"/>
</dbReference>
<evidence type="ECO:0000255" key="1">
    <source>
        <dbReference type="HAMAP-Rule" id="MF_00558"/>
    </source>
</evidence>
<comment type="function">
    <text evidence="1">Succinyl-CoA synthetase functions in the citric acid cycle (TCA), coupling the hydrolysis of succinyl-CoA to the synthesis of either ATP or GTP and thus represents the only step of substrate-level phosphorylation in the TCA. The beta subunit provides nucleotide specificity of the enzyme and binds the substrate succinate, while the binding sites for coenzyme A and phosphate are found in the alpha subunit.</text>
</comment>
<comment type="catalytic activity">
    <reaction evidence="1">
        <text>succinate + ATP + CoA = succinyl-CoA + ADP + phosphate</text>
        <dbReference type="Rhea" id="RHEA:17661"/>
        <dbReference type="ChEBI" id="CHEBI:30031"/>
        <dbReference type="ChEBI" id="CHEBI:30616"/>
        <dbReference type="ChEBI" id="CHEBI:43474"/>
        <dbReference type="ChEBI" id="CHEBI:57287"/>
        <dbReference type="ChEBI" id="CHEBI:57292"/>
        <dbReference type="ChEBI" id="CHEBI:456216"/>
        <dbReference type="EC" id="6.2.1.5"/>
    </reaction>
    <physiologicalReaction direction="right-to-left" evidence="1">
        <dbReference type="Rhea" id="RHEA:17663"/>
    </physiologicalReaction>
</comment>
<comment type="catalytic activity">
    <reaction evidence="1">
        <text>GTP + succinate + CoA = succinyl-CoA + GDP + phosphate</text>
        <dbReference type="Rhea" id="RHEA:22120"/>
        <dbReference type="ChEBI" id="CHEBI:30031"/>
        <dbReference type="ChEBI" id="CHEBI:37565"/>
        <dbReference type="ChEBI" id="CHEBI:43474"/>
        <dbReference type="ChEBI" id="CHEBI:57287"/>
        <dbReference type="ChEBI" id="CHEBI:57292"/>
        <dbReference type="ChEBI" id="CHEBI:58189"/>
    </reaction>
    <physiologicalReaction direction="right-to-left" evidence="1">
        <dbReference type="Rhea" id="RHEA:22122"/>
    </physiologicalReaction>
</comment>
<comment type="cofactor">
    <cofactor evidence="1">
        <name>Mg(2+)</name>
        <dbReference type="ChEBI" id="CHEBI:18420"/>
    </cofactor>
    <text evidence="1">Binds 1 Mg(2+) ion per subunit.</text>
</comment>
<comment type="pathway">
    <text evidence="1">Carbohydrate metabolism; tricarboxylic acid cycle; succinate from succinyl-CoA (ligase route): step 1/1.</text>
</comment>
<comment type="subunit">
    <text evidence="1">Heterotetramer of two alpha and two beta subunits.</text>
</comment>
<comment type="similarity">
    <text evidence="1">Belongs to the succinate/malate CoA ligase beta subunit family.</text>
</comment>
<keyword id="KW-0067">ATP-binding</keyword>
<keyword id="KW-0436">Ligase</keyword>
<keyword id="KW-0460">Magnesium</keyword>
<keyword id="KW-0479">Metal-binding</keyword>
<keyword id="KW-0547">Nucleotide-binding</keyword>
<keyword id="KW-1185">Reference proteome</keyword>
<keyword id="KW-0816">Tricarboxylic acid cycle</keyword>
<accession>Q28U74</accession>
<proteinExistence type="inferred from homology"/>
<name>SUCC_JANSC</name>
<feature type="chain" id="PRO_1000082110" description="Succinate--CoA ligase [ADP-forming] subunit beta">
    <location>
        <begin position="1"/>
        <end position="397"/>
    </location>
</feature>
<feature type="domain" description="ATP-grasp" evidence="1">
    <location>
        <begin position="9"/>
        <end position="254"/>
    </location>
</feature>
<feature type="binding site" evidence="1">
    <location>
        <position position="46"/>
    </location>
    <ligand>
        <name>ATP</name>
        <dbReference type="ChEBI" id="CHEBI:30616"/>
    </ligand>
</feature>
<feature type="binding site" evidence="1">
    <location>
        <begin position="53"/>
        <end position="55"/>
    </location>
    <ligand>
        <name>ATP</name>
        <dbReference type="ChEBI" id="CHEBI:30616"/>
    </ligand>
</feature>
<feature type="binding site" evidence="1">
    <location>
        <position position="109"/>
    </location>
    <ligand>
        <name>ATP</name>
        <dbReference type="ChEBI" id="CHEBI:30616"/>
    </ligand>
</feature>
<feature type="binding site" evidence="1">
    <location>
        <position position="112"/>
    </location>
    <ligand>
        <name>ATP</name>
        <dbReference type="ChEBI" id="CHEBI:30616"/>
    </ligand>
</feature>
<feature type="binding site" evidence="1">
    <location>
        <position position="117"/>
    </location>
    <ligand>
        <name>ATP</name>
        <dbReference type="ChEBI" id="CHEBI:30616"/>
    </ligand>
</feature>
<feature type="binding site" evidence="1">
    <location>
        <position position="209"/>
    </location>
    <ligand>
        <name>Mg(2+)</name>
        <dbReference type="ChEBI" id="CHEBI:18420"/>
    </ligand>
</feature>
<feature type="binding site" evidence="1">
    <location>
        <position position="223"/>
    </location>
    <ligand>
        <name>Mg(2+)</name>
        <dbReference type="ChEBI" id="CHEBI:18420"/>
    </ligand>
</feature>
<feature type="binding site" evidence="1">
    <location>
        <position position="274"/>
    </location>
    <ligand>
        <name>substrate</name>
        <note>ligand shared with subunit alpha</note>
    </ligand>
</feature>
<feature type="binding site" evidence="1">
    <location>
        <begin position="331"/>
        <end position="333"/>
    </location>
    <ligand>
        <name>substrate</name>
        <note>ligand shared with subunit alpha</note>
    </ligand>
</feature>
<organism>
    <name type="scientific">Jannaschia sp. (strain CCS1)</name>
    <dbReference type="NCBI Taxonomy" id="290400"/>
    <lineage>
        <taxon>Bacteria</taxon>
        <taxon>Pseudomonadati</taxon>
        <taxon>Pseudomonadota</taxon>
        <taxon>Alphaproteobacteria</taxon>
        <taxon>Rhodobacterales</taxon>
        <taxon>Roseobacteraceae</taxon>
        <taxon>Jannaschia</taxon>
    </lineage>
</organism>
<reference key="1">
    <citation type="submission" date="2006-02" db="EMBL/GenBank/DDBJ databases">
        <title>Complete sequence of chromosome of Jannaschia sp. CCS1.</title>
        <authorList>
            <consortium name="US DOE Joint Genome Institute"/>
            <person name="Copeland A."/>
            <person name="Lucas S."/>
            <person name="Lapidus A."/>
            <person name="Barry K."/>
            <person name="Detter J.C."/>
            <person name="Glavina del Rio T."/>
            <person name="Hammon N."/>
            <person name="Israni S."/>
            <person name="Pitluck S."/>
            <person name="Brettin T."/>
            <person name="Bruce D."/>
            <person name="Han C."/>
            <person name="Tapia R."/>
            <person name="Gilna P."/>
            <person name="Chertkov O."/>
            <person name="Saunders E."/>
            <person name="Schmutz J."/>
            <person name="Larimer F."/>
            <person name="Land M."/>
            <person name="Kyrpides N."/>
            <person name="Lykidis A."/>
            <person name="Moran M.A."/>
            <person name="Belas R."/>
            <person name="Ye W."/>
            <person name="Buchan A."/>
            <person name="Gonzalez J.M."/>
            <person name="Schell M.A."/>
            <person name="Richardson P."/>
        </authorList>
    </citation>
    <scope>NUCLEOTIDE SEQUENCE [LARGE SCALE GENOMIC DNA]</scope>
    <source>
        <strain>CCS1</strain>
    </source>
</reference>
<gene>
    <name evidence="1" type="primary">sucC</name>
    <name type="ordered locus">Jann_0821</name>
</gene>
<protein>
    <recommendedName>
        <fullName evidence="1">Succinate--CoA ligase [ADP-forming] subunit beta</fullName>
        <ecNumber evidence="1">6.2.1.5</ecNumber>
    </recommendedName>
    <alternativeName>
        <fullName evidence="1">Succinyl-CoA synthetase subunit beta</fullName>
        <shortName evidence="1">SCS-beta</shortName>
    </alternativeName>
</protein>
<sequence>MNIHEYQAKALLAQYGAPVSDGRVVTKAEDAKTAAGEMDGPLWVVKAQIHAGGRGKGKFKEADAGEAGGVRLAKSAQEAADEAKKMLGRTLVTHQTGPVGKQVNRIYIEDGSGIETEMYLALLVDRQSSRISFVCSTEGGMDIEEVAASTPEKILSFSVDPATGYQPYHGRRVAFSLGLEGQQVKQCVKLMGQLFTAFQEKDMEMLEINPLIVTDEGNLKVLDAKVSFDGNAVYRHADVASLRDETEEDPKELAASKFDLNYIALDGEIGCMVNGAGLAMATMDIIKLYGAEPANFLDVGGGATKEKVTEAFKIITSDPQVKGIFVNIFGGIMRCDIIAEGVIAAVKEVGLQMPLVVRLEGTNVEKGKEIINNSGLDVIAADDLKDGAQKIVKAVKG</sequence>